<keyword id="KW-0997">Cell inner membrane</keyword>
<keyword id="KW-1003">Cell membrane</keyword>
<keyword id="KW-0175">Coiled coil</keyword>
<keyword id="KW-0472">Membrane</keyword>
<keyword id="KW-1185">Reference proteome</keyword>
<keyword id="KW-0769">Symport</keyword>
<keyword id="KW-0812">Transmembrane</keyword>
<keyword id="KW-1133">Transmembrane helix</keyword>
<keyword id="KW-0813">Transport</keyword>
<dbReference type="EMBL" id="AE005174">
    <property type="protein sequence ID" value="AAG59310.1"/>
    <property type="molecule type" value="Genomic_DNA"/>
</dbReference>
<dbReference type="EMBL" id="BA000007">
    <property type="protein sequence ID" value="BAB38516.1"/>
    <property type="molecule type" value="Genomic_DNA"/>
</dbReference>
<dbReference type="PIR" id="B86106">
    <property type="entry name" value="B86106"/>
</dbReference>
<dbReference type="PIR" id="E91265">
    <property type="entry name" value="E91265"/>
</dbReference>
<dbReference type="RefSeq" id="NP_313120.1">
    <property type="nucleotide sequence ID" value="NC_002695.1"/>
</dbReference>
<dbReference type="RefSeq" id="WP_001298520.1">
    <property type="nucleotide sequence ID" value="NZ_VOAI01000008.1"/>
</dbReference>
<dbReference type="BMRB" id="P0C0L8"/>
<dbReference type="SMR" id="P0C0L8"/>
<dbReference type="STRING" id="155864.Z5713"/>
<dbReference type="GeneID" id="914238"/>
<dbReference type="KEGG" id="ece:Z5713"/>
<dbReference type="KEGG" id="ecs:ECs_5093"/>
<dbReference type="PATRIC" id="fig|386585.9.peg.5323"/>
<dbReference type="eggNOG" id="COG0477">
    <property type="taxonomic scope" value="Bacteria"/>
</dbReference>
<dbReference type="HOGENOM" id="CLU_001265_39_0_6"/>
<dbReference type="OMA" id="GYYVVFT"/>
<dbReference type="Proteomes" id="UP000000558">
    <property type="component" value="Chromosome"/>
</dbReference>
<dbReference type="Proteomes" id="UP000002519">
    <property type="component" value="Chromosome"/>
</dbReference>
<dbReference type="GO" id="GO:0005886">
    <property type="term" value="C:plasma membrane"/>
    <property type="evidence" value="ECO:0007669"/>
    <property type="project" value="UniProtKB-SubCell"/>
</dbReference>
<dbReference type="GO" id="GO:0015293">
    <property type="term" value="F:symporter activity"/>
    <property type="evidence" value="ECO:0007669"/>
    <property type="project" value="UniProtKB-KW"/>
</dbReference>
<dbReference type="CDD" id="cd17366">
    <property type="entry name" value="MFS_ProP"/>
    <property type="match status" value="1"/>
</dbReference>
<dbReference type="FunFam" id="1.20.1250.20:FF:000001">
    <property type="entry name" value="Dicarboxylate MFS transporter"/>
    <property type="match status" value="1"/>
</dbReference>
<dbReference type="FunFam" id="1.20.1250.20:FF:000051">
    <property type="entry name" value="Proline/glycine betaine transporter"/>
    <property type="match status" value="1"/>
</dbReference>
<dbReference type="Gene3D" id="1.20.1250.20">
    <property type="entry name" value="MFS general substrate transporter like domains"/>
    <property type="match status" value="2"/>
</dbReference>
<dbReference type="InterPro" id="IPR051084">
    <property type="entry name" value="H+-coupled_symporters"/>
</dbReference>
<dbReference type="InterPro" id="IPR020846">
    <property type="entry name" value="MFS_dom"/>
</dbReference>
<dbReference type="InterPro" id="IPR005828">
    <property type="entry name" value="MFS_sugar_transport-like"/>
</dbReference>
<dbReference type="InterPro" id="IPR036259">
    <property type="entry name" value="MFS_trans_sf"/>
</dbReference>
<dbReference type="InterPro" id="IPR004736">
    <property type="entry name" value="MHS_symport"/>
</dbReference>
<dbReference type="InterPro" id="IPR015041">
    <property type="entry name" value="Osmo_CC"/>
</dbReference>
<dbReference type="InterPro" id="IPR036292">
    <property type="entry name" value="ProP_C"/>
</dbReference>
<dbReference type="InterPro" id="IPR005829">
    <property type="entry name" value="Sugar_transporter_CS"/>
</dbReference>
<dbReference type="NCBIfam" id="TIGR00883">
    <property type="entry name" value="2A0106"/>
    <property type="match status" value="1"/>
</dbReference>
<dbReference type="NCBIfam" id="NF007927">
    <property type="entry name" value="PRK10642.1"/>
    <property type="match status" value="1"/>
</dbReference>
<dbReference type="PANTHER" id="PTHR43528">
    <property type="entry name" value="ALPHA-KETOGLUTARATE PERMEASE"/>
    <property type="match status" value="1"/>
</dbReference>
<dbReference type="PANTHER" id="PTHR43528:SF5">
    <property type="entry name" value="PROLINE_BETAINE TRANSPORTER"/>
    <property type="match status" value="1"/>
</dbReference>
<dbReference type="Pfam" id="PF08946">
    <property type="entry name" value="Osmo_CC"/>
    <property type="match status" value="1"/>
</dbReference>
<dbReference type="Pfam" id="PF00083">
    <property type="entry name" value="Sugar_tr"/>
    <property type="match status" value="1"/>
</dbReference>
<dbReference type="SUPFAM" id="SSF103473">
    <property type="entry name" value="MFS general substrate transporter"/>
    <property type="match status" value="1"/>
</dbReference>
<dbReference type="SUPFAM" id="SSF103661">
    <property type="entry name" value="Proline/betaine transporter ProP, C-terminal cytoplasmic domain"/>
    <property type="match status" value="1"/>
</dbReference>
<dbReference type="PROSITE" id="PS50850">
    <property type="entry name" value="MFS"/>
    <property type="match status" value="1"/>
</dbReference>
<dbReference type="PROSITE" id="PS00216">
    <property type="entry name" value="SUGAR_TRANSPORT_1"/>
    <property type="match status" value="1"/>
</dbReference>
<organism>
    <name type="scientific">Escherichia coli O157:H7</name>
    <dbReference type="NCBI Taxonomy" id="83334"/>
    <lineage>
        <taxon>Bacteria</taxon>
        <taxon>Pseudomonadati</taxon>
        <taxon>Pseudomonadota</taxon>
        <taxon>Gammaproteobacteria</taxon>
        <taxon>Enterobacterales</taxon>
        <taxon>Enterobacteriaceae</taxon>
        <taxon>Escherichia</taxon>
    </lineage>
</organism>
<comment type="function">
    <text evidence="1">Proton symporter that senses osmotic shifts and responds by importing osmolytes such as proline, glycine betaine, stachydrine, pipecolic acid, ectoine and taurine. It is both an osmosensor and an osmoregulator which is available to participate early in the bacterial osmoregulatory response (By similarity).</text>
</comment>
<comment type="subcellular location">
    <subcellularLocation>
        <location evidence="1">Cell inner membrane</location>
        <topology evidence="1">Multi-pass membrane protein</topology>
    </subcellularLocation>
</comment>
<comment type="similarity">
    <text evidence="3">Belongs to the major facilitator superfamily. Metabolite:H+ Symporter (MHS) family (TC 2.A.1.6) family.</text>
</comment>
<proteinExistence type="inferred from homology"/>
<accession>P0C0L8</accession>
<accession>P30848</accession>
<name>PROP_ECO57</name>
<evidence type="ECO:0000250" key="1"/>
<evidence type="ECO:0000255" key="2"/>
<evidence type="ECO:0000305" key="3"/>
<reference key="1">
    <citation type="journal article" date="2001" name="Nature">
        <title>Genome sequence of enterohaemorrhagic Escherichia coli O157:H7.</title>
        <authorList>
            <person name="Perna N.T."/>
            <person name="Plunkett G. III"/>
            <person name="Burland V."/>
            <person name="Mau B."/>
            <person name="Glasner J.D."/>
            <person name="Rose D.J."/>
            <person name="Mayhew G.F."/>
            <person name="Evans P.S."/>
            <person name="Gregor J."/>
            <person name="Kirkpatrick H.A."/>
            <person name="Posfai G."/>
            <person name="Hackett J."/>
            <person name="Klink S."/>
            <person name="Boutin A."/>
            <person name="Shao Y."/>
            <person name="Miller L."/>
            <person name="Grotbeck E.J."/>
            <person name="Davis N.W."/>
            <person name="Lim A."/>
            <person name="Dimalanta E.T."/>
            <person name="Potamousis K."/>
            <person name="Apodaca J."/>
            <person name="Anantharaman T.S."/>
            <person name="Lin J."/>
            <person name="Yen G."/>
            <person name="Schwartz D.C."/>
            <person name="Welch R.A."/>
            <person name="Blattner F.R."/>
        </authorList>
    </citation>
    <scope>NUCLEOTIDE SEQUENCE [LARGE SCALE GENOMIC DNA]</scope>
    <source>
        <strain>O157:H7 / EDL933 / ATCC 700927 / EHEC</strain>
    </source>
</reference>
<reference key="2">
    <citation type="journal article" date="2001" name="DNA Res.">
        <title>Complete genome sequence of enterohemorrhagic Escherichia coli O157:H7 and genomic comparison with a laboratory strain K-12.</title>
        <authorList>
            <person name="Hayashi T."/>
            <person name="Makino K."/>
            <person name="Ohnishi M."/>
            <person name="Kurokawa K."/>
            <person name="Ishii K."/>
            <person name="Yokoyama K."/>
            <person name="Han C.-G."/>
            <person name="Ohtsubo E."/>
            <person name="Nakayama K."/>
            <person name="Murata T."/>
            <person name="Tanaka M."/>
            <person name="Tobe T."/>
            <person name="Iida T."/>
            <person name="Takami H."/>
            <person name="Honda T."/>
            <person name="Sasakawa C."/>
            <person name="Ogasawara N."/>
            <person name="Yasunaga T."/>
            <person name="Kuhara S."/>
            <person name="Shiba T."/>
            <person name="Hattori M."/>
            <person name="Shinagawa H."/>
        </authorList>
    </citation>
    <scope>NUCLEOTIDE SEQUENCE [LARGE SCALE GENOMIC DNA]</scope>
    <source>
        <strain>O157:H7 / Sakai / RIMD 0509952 / EHEC</strain>
    </source>
</reference>
<sequence length="500" mass="54846">MLKRKKVKPITLRDVTIIDDGKLRKAITAASLGNAMEWFDFGVYGFVAYALGKVFFPGADPSVQMVAALATFSVPFLIRPLGGLFFGMLGDKYGRQKILAITIVIMSISTFCIGLIPSYDTIGIWAPILLLICKMAQGFSVGGEYTGASIFVAEYSPDRKRGFMGSWLDFGSIAGFVLGAGVVVLISTIVGEANFLDWGWRIPFFIALPLGIIGLYLRHALEETPAFQQHVDKLEQGDREGLQDGPKVSFKEIATKYWRSLLTCIGLVIATNVTYYMLLTYMPSYLSHNLHYSEDHGVLIIIAIMIGMLFVQPVMGLLSDRFGRRPFVLLGSVALFVLAIPAFILINSNVIGLIFAGLLMLAVILNCFTGVMASTLPAMFPTHIRYSALAAAFNISVLVAGLTPTLAAWLVESSQNLMMPAYYLMVVAVVGLITGVTMKETANRPLKGATPAASDIQEAKEILVEHYDNIEQKIDDIDHEIADLQAKRTRLVQQHPRIDE</sequence>
<feature type="chain" id="PRO_0000050325" description="Proline/betaine transporter">
    <location>
        <begin position="1"/>
        <end position="500"/>
    </location>
</feature>
<feature type="topological domain" description="Cytoplasmic" evidence="2">
    <location>
        <begin position="1"/>
        <end position="37"/>
    </location>
</feature>
<feature type="transmembrane region" description="Helical; Name=1" evidence="2">
    <location>
        <begin position="38"/>
        <end position="58"/>
    </location>
</feature>
<feature type="topological domain" description="Periplasmic" evidence="2">
    <location>
        <begin position="59"/>
        <end position="65"/>
    </location>
</feature>
<feature type="transmembrane region" description="Helical; Name=2" evidence="2">
    <location>
        <begin position="66"/>
        <end position="86"/>
    </location>
</feature>
<feature type="topological domain" description="Cytoplasmic" evidence="2">
    <location>
        <begin position="87"/>
        <end position="97"/>
    </location>
</feature>
<feature type="transmembrane region" description="Helical; Name=3" evidence="2">
    <location>
        <begin position="98"/>
        <end position="118"/>
    </location>
</feature>
<feature type="topological domain" description="Periplasmic" evidence="2">
    <location>
        <begin position="119"/>
        <end position="121"/>
    </location>
</feature>
<feature type="transmembrane region" description="Helical; Name=4" evidence="2">
    <location>
        <begin position="122"/>
        <end position="142"/>
    </location>
</feature>
<feature type="topological domain" description="Cytoplasmic" evidence="2">
    <location>
        <begin position="143"/>
        <end position="169"/>
    </location>
</feature>
<feature type="transmembrane region" description="Helical; Name=5" evidence="2">
    <location>
        <begin position="170"/>
        <end position="190"/>
    </location>
</feature>
<feature type="topological domain" description="Periplasmic" evidence="2">
    <location>
        <begin position="191"/>
        <end position="194"/>
    </location>
</feature>
<feature type="transmembrane region" description="Helical; Name=6" evidence="2">
    <location>
        <begin position="195"/>
        <end position="215"/>
    </location>
</feature>
<feature type="topological domain" description="Cytoplasmic" evidence="2">
    <location>
        <begin position="216"/>
        <end position="260"/>
    </location>
</feature>
<feature type="transmembrane region" description="Helical; Name=7" evidence="2">
    <location>
        <begin position="261"/>
        <end position="281"/>
    </location>
</feature>
<feature type="topological domain" description="Periplasmic" evidence="2">
    <location>
        <begin position="282"/>
        <end position="297"/>
    </location>
</feature>
<feature type="transmembrane region" description="Helical; Name=8" evidence="2">
    <location>
        <begin position="298"/>
        <end position="318"/>
    </location>
</feature>
<feature type="topological domain" description="Cytoplasmic" evidence="2">
    <location>
        <begin position="319"/>
        <end position="325"/>
    </location>
</feature>
<feature type="transmembrane region" description="Helical; Name=9" evidence="2">
    <location>
        <begin position="326"/>
        <end position="346"/>
    </location>
</feature>
<feature type="topological domain" description="Periplasmic" evidence="2">
    <location>
        <begin position="347"/>
        <end position="350"/>
    </location>
</feature>
<feature type="transmembrane region" description="Helical; Name=10" evidence="2">
    <location>
        <begin position="351"/>
        <end position="371"/>
    </location>
</feature>
<feature type="topological domain" description="Cytoplasmic" evidence="2">
    <location>
        <begin position="372"/>
        <end position="390"/>
    </location>
</feature>
<feature type="transmembrane region" description="Helical; Name=11" evidence="2">
    <location>
        <begin position="391"/>
        <end position="411"/>
    </location>
</feature>
<feature type="topological domain" description="Periplasmic" evidence="2">
    <location>
        <begin position="412"/>
        <end position="416"/>
    </location>
</feature>
<feature type="transmembrane region" description="Helical; Name=12" evidence="2">
    <location>
        <begin position="417"/>
        <end position="437"/>
    </location>
</feature>
<feature type="topological domain" description="Cytoplasmic" evidence="2">
    <location>
        <begin position="438"/>
        <end position="500"/>
    </location>
</feature>
<feature type="coiled-coil region" evidence="2">
    <location>
        <begin position="453"/>
        <end position="498"/>
    </location>
</feature>
<protein>
    <recommendedName>
        <fullName>Proline/betaine transporter</fullName>
    </recommendedName>
    <alternativeName>
        <fullName>Proline porter II</fullName>
        <shortName>PPII</shortName>
    </alternativeName>
</protein>
<gene>
    <name type="primary">proP</name>
    <name type="ordered locus">Z5713</name>
    <name type="ordered locus">ECs5093</name>
</gene>